<dbReference type="EMBL" id="CM003140">
    <property type="protein sequence ID" value="KIS71633.1"/>
    <property type="molecule type" value="Genomic_DNA"/>
</dbReference>
<dbReference type="RefSeq" id="XP_011386042.1">
    <property type="nucleotide sequence ID" value="XM_011387740.1"/>
</dbReference>
<dbReference type="SMR" id="Q4PII9"/>
<dbReference type="FunCoup" id="Q4PII9">
    <property type="interactions" value="105"/>
</dbReference>
<dbReference type="STRING" id="237631.Q4PII9"/>
<dbReference type="EnsemblFungi" id="KIS71633">
    <property type="protein sequence ID" value="KIS71633"/>
    <property type="gene ID" value="UMAG_00074"/>
</dbReference>
<dbReference type="GeneID" id="23561476"/>
<dbReference type="KEGG" id="uma:UMAG_00074"/>
<dbReference type="VEuPathDB" id="FungiDB:UMAG_00074"/>
<dbReference type="eggNOG" id="KOG4771">
    <property type="taxonomic scope" value="Eukaryota"/>
</dbReference>
<dbReference type="HOGENOM" id="CLU_078857_1_0_1"/>
<dbReference type="InParanoid" id="Q4PII9"/>
<dbReference type="OMA" id="MQQTEAD"/>
<dbReference type="OrthoDB" id="285729at2759"/>
<dbReference type="Proteomes" id="UP000000561">
    <property type="component" value="Chromosome 1"/>
</dbReference>
<dbReference type="GO" id="GO:0005730">
    <property type="term" value="C:nucleolus"/>
    <property type="evidence" value="ECO:0000318"/>
    <property type="project" value="GO_Central"/>
</dbReference>
<dbReference type="GO" id="GO:1990904">
    <property type="term" value="C:ribonucleoprotein complex"/>
    <property type="evidence" value="ECO:0007669"/>
    <property type="project" value="UniProtKB-KW"/>
</dbReference>
<dbReference type="GO" id="GO:0042273">
    <property type="term" value="P:ribosomal large subunit biogenesis"/>
    <property type="evidence" value="ECO:0000318"/>
    <property type="project" value="GO_Central"/>
</dbReference>
<dbReference type="GO" id="GO:0006364">
    <property type="term" value="P:rRNA processing"/>
    <property type="evidence" value="ECO:0007669"/>
    <property type="project" value="UniProtKB-KW"/>
</dbReference>
<dbReference type="InterPro" id="IPR019002">
    <property type="entry name" value="Ribosome_biogenesis_Nop16"/>
</dbReference>
<dbReference type="PANTHER" id="PTHR13243">
    <property type="entry name" value="HSPC111 PROTEIN-RELATED"/>
    <property type="match status" value="1"/>
</dbReference>
<dbReference type="PANTHER" id="PTHR13243:SF1">
    <property type="entry name" value="NUCLEOLAR PROTEIN 16"/>
    <property type="match status" value="1"/>
</dbReference>
<dbReference type="Pfam" id="PF09420">
    <property type="entry name" value="Nop16"/>
    <property type="match status" value="1"/>
</dbReference>
<organism>
    <name type="scientific">Mycosarcoma maydis</name>
    <name type="common">Corn smut fungus</name>
    <name type="synonym">Ustilago maydis</name>
    <dbReference type="NCBI Taxonomy" id="5270"/>
    <lineage>
        <taxon>Eukaryota</taxon>
        <taxon>Fungi</taxon>
        <taxon>Dikarya</taxon>
        <taxon>Basidiomycota</taxon>
        <taxon>Ustilaginomycotina</taxon>
        <taxon>Ustilaginomycetes</taxon>
        <taxon>Ustilaginales</taxon>
        <taxon>Ustilaginaceae</taxon>
        <taxon>Mycosarcoma</taxon>
    </lineage>
</organism>
<sequence>MANPRQRRKARSGSTLKPSLNAKKQMKKKLARAPTIHGADVLKDNYDPKLTLRQNYARLGLVPSLDVRPNTGGTERAPSSISASSSKEGQAAVRKGMARVIRDDAGNIVDIIEADEHDQDETAWGKPLPSSIADRSDVPTFMPVSQPASNPDALQQLEQIASQAAPVERHTSQKESQWLVELVKKHDDDTQAMAKDRHLNLWQKTEGEIKRAIRKAGGFQALRTSA</sequence>
<keyword id="KW-0539">Nucleus</keyword>
<keyword id="KW-1185">Reference proteome</keyword>
<keyword id="KW-0687">Ribonucleoprotein</keyword>
<keyword id="KW-0690">Ribosome biogenesis</keyword>
<keyword id="KW-0698">rRNA processing</keyword>
<accession>Q4PII9</accession>
<accession>A0A0D1CZE5</accession>
<comment type="function">
    <text evidence="1">Involved in the biogenesis of the 60S ribosomal subunit.</text>
</comment>
<comment type="subunit">
    <text evidence="1">Component of the pre-66S ribosomal particle.</text>
</comment>
<comment type="subcellular location">
    <subcellularLocation>
        <location evidence="1">Nucleus</location>
        <location evidence="1">Nucleolus</location>
    </subcellularLocation>
</comment>
<comment type="similarity">
    <text evidence="3">Belongs to the NOP16 family.</text>
</comment>
<proteinExistence type="inferred from homology"/>
<reference key="1">
    <citation type="journal article" date="2006" name="Nature">
        <title>Insights from the genome of the biotrophic fungal plant pathogen Ustilago maydis.</title>
        <authorList>
            <person name="Kaemper J."/>
            <person name="Kahmann R."/>
            <person name="Boelker M."/>
            <person name="Ma L.-J."/>
            <person name="Brefort T."/>
            <person name="Saville B.J."/>
            <person name="Banuett F."/>
            <person name="Kronstad J.W."/>
            <person name="Gold S.E."/>
            <person name="Mueller O."/>
            <person name="Perlin M.H."/>
            <person name="Woesten H.A.B."/>
            <person name="de Vries R."/>
            <person name="Ruiz-Herrera J."/>
            <person name="Reynaga-Pena C.G."/>
            <person name="Snetselaar K."/>
            <person name="McCann M."/>
            <person name="Perez-Martin J."/>
            <person name="Feldbruegge M."/>
            <person name="Basse C.W."/>
            <person name="Steinberg G."/>
            <person name="Ibeas J.I."/>
            <person name="Holloman W."/>
            <person name="Guzman P."/>
            <person name="Farman M.L."/>
            <person name="Stajich J.E."/>
            <person name="Sentandreu R."/>
            <person name="Gonzalez-Prieto J.M."/>
            <person name="Kennell J.C."/>
            <person name="Molina L."/>
            <person name="Schirawski J."/>
            <person name="Mendoza-Mendoza A."/>
            <person name="Greilinger D."/>
            <person name="Muench K."/>
            <person name="Roessel N."/>
            <person name="Scherer M."/>
            <person name="Vranes M."/>
            <person name="Ladendorf O."/>
            <person name="Vincon V."/>
            <person name="Fuchs U."/>
            <person name="Sandrock B."/>
            <person name="Meng S."/>
            <person name="Ho E.C.H."/>
            <person name="Cahill M.J."/>
            <person name="Boyce K.J."/>
            <person name="Klose J."/>
            <person name="Klosterman S.J."/>
            <person name="Deelstra H.J."/>
            <person name="Ortiz-Castellanos L."/>
            <person name="Li W."/>
            <person name="Sanchez-Alonso P."/>
            <person name="Schreier P.H."/>
            <person name="Haeuser-Hahn I."/>
            <person name="Vaupel M."/>
            <person name="Koopmann E."/>
            <person name="Friedrich G."/>
            <person name="Voss H."/>
            <person name="Schlueter T."/>
            <person name="Margolis J."/>
            <person name="Platt D."/>
            <person name="Swimmer C."/>
            <person name="Gnirke A."/>
            <person name="Chen F."/>
            <person name="Vysotskaia V."/>
            <person name="Mannhaupt G."/>
            <person name="Gueldener U."/>
            <person name="Muensterkoetter M."/>
            <person name="Haase D."/>
            <person name="Oesterheld M."/>
            <person name="Mewes H.-W."/>
            <person name="Mauceli E.W."/>
            <person name="DeCaprio D."/>
            <person name="Wade C.M."/>
            <person name="Butler J."/>
            <person name="Young S.K."/>
            <person name="Jaffe D.B."/>
            <person name="Calvo S.E."/>
            <person name="Nusbaum C."/>
            <person name="Galagan J.E."/>
            <person name="Birren B.W."/>
        </authorList>
    </citation>
    <scope>NUCLEOTIDE SEQUENCE [LARGE SCALE GENOMIC DNA]</scope>
    <source>
        <strain>DSM 14603 / FGSC 9021 / UM521</strain>
    </source>
</reference>
<reference key="2">
    <citation type="submission" date="2014-09" db="EMBL/GenBank/DDBJ databases">
        <authorList>
            <person name="Gueldener U."/>
            <person name="Muensterkoetter M."/>
            <person name="Walter M.C."/>
            <person name="Mannhaupt G."/>
            <person name="Kahmann R."/>
        </authorList>
    </citation>
    <scope>GENOME REANNOTATION</scope>
    <source>
        <strain>DSM 14603 / FGSC 9021 / UM521</strain>
    </source>
</reference>
<evidence type="ECO:0000250" key="1"/>
<evidence type="ECO:0000256" key="2">
    <source>
        <dbReference type="SAM" id="MobiDB-lite"/>
    </source>
</evidence>
<evidence type="ECO:0000305" key="3"/>
<gene>
    <name type="primary">NOP16</name>
    <name type="ORF">UMAG_00074</name>
</gene>
<protein>
    <recommendedName>
        <fullName>Nucleolar protein 16</fullName>
    </recommendedName>
</protein>
<feature type="chain" id="PRO_0000320387" description="Nucleolar protein 16">
    <location>
        <begin position="1"/>
        <end position="226"/>
    </location>
</feature>
<feature type="region of interest" description="Disordered" evidence="2">
    <location>
        <begin position="1"/>
        <end position="23"/>
    </location>
</feature>
<feature type="region of interest" description="Disordered" evidence="2">
    <location>
        <begin position="65"/>
        <end position="90"/>
    </location>
</feature>
<feature type="region of interest" description="Disordered" evidence="2">
    <location>
        <begin position="118"/>
        <end position="151"/>
    </location>
</feature>
<feature type="compositionally biased region" description="Basic residues" evidence="2">
    <location>
        <begin position="1"/>
        <end position="11"/>
    </location>
</feature>
<name>NOP16_MYCMD</name>